<evidence type="ECO:0000250" key="1">
    <source>
        <dbReference type="UniProtKB" id="P02244"/>
    </source>
</evidence>
<evidence type="ECO:0000305" key="2"/>
<feature type="chain" id="PRO_0000191829" description="Hemerythrin subunit beta">
    <location>
        <begin position="1"/>
        <end position="117"/>
    </location>
</feature>
<feature type="binding site" evidence="1">
    <location>
        <position position="24"/>
    </location>
    <ligand>
        <name>Fe cation</name>
        <dbReference type="ChEBI" id="CHEBI:24875"/>
        <label>1</label>
    </ligand>
</feature>
<feature type="binding site" evidence="1">
    <location>
        <position position="53"/>
    </location>
    <ligand>
        <name>Fe cation</name>
        <dbReference type="ChEBI" id="CHEBI:24875"/>
        <label>1</label>
    </ligand>
</feature>
<feature type="binding site" evidence="1">
    <location>
        <position position="57"/>
    </location>
    <ligand>
        <name>Fe cation</name>
        <dbReference type="ChEBI" id="CHEBI:24875"/>
        <label>1</label>
    </ligand>
</feature>
<feature type="binding site" evidence="1">
    <location>
        <position position="57"/>
    </location>
    <ligand>
        <name>Fe cation</name>
        <dbReference type="ChEBI" id="CHEBI:24875"/>
        <label>2</label>
    </ligand>
</feature>
<feature type="binding site" evidence="1">
    <location>
        <position position="72"/>
    </location>
    <ligand>
        <name>Fe cation</name>
        <dbReference type="ChEBI" id="CHEBI:24875"/>
        <label>2</label>
    </ligand>
</feature>
<feature type="binding site" evidence="1">
    <location>
        <position position="76"/>
    </location>
    <ligand>
        <name>Fe cation</name>
        <dbReference type="ChEBI" id="CHEBI:24875"/>
        <label>2</label>
    </ligand>
</feature>
<feature type="binding site" evidence="1">
    <location>
        <position position="105"/>
    </location>
    <ligand>
        <name>Fe cation</name>
        <dbReference type="ChEBI" id="CHEBI:24875"/>
        <label>2</label>
    </ligand>
</feature>
<feature type="binding site" evidence="1">
    <location>
        <position position="110"/>
    </location>
    <ligand>
        <name>Fe cation</name>
        <dbReference type="ChEBI" id="CHEBI:24875"/>
        <label>1</label>
    </ligand>
</feature>
<feature type="binding site" evidence="1">
    <location>
        <position position="110"/>
    </location>
    <ligand>
        <name>Fe cation</name>
        <dbReference type="ChEBI" id="CHEBI:24875"/>
        <label>2</label>
    </ligand>
</feature>
<accession>P23544</accession>
<accession>Q7M411</accession>
<reference key="1">
    <citation type="journal article" date="1994" name="Biochim. Biophys. Acta">
        <title>Amino-acid sequences of the alpha- and beta-subunits of hemerythrin from Lingula reevii.</title>
        <authorList>
            <person name="Negri A."/>
            <person name="Tedeschi G."/>
            <person name="Bonomi F."/>
            <person name="Zhang J.-H."/>
            <person name="Kurtz D.M. Jr."/>
        </authorList>
    </citation>
    <scope>PROTEIN SEQUENCE</scope>
</reference>
<reference key="2">
    <citation type="journal article" date="1991" name="Biochemistry">
        <title>Two distinct subunits of hemerythrin from the brachiopod Lingula reevii: an apparent requirement for cooperativity in O2 binding.</title>
        <authorList>
            <person name="Zhang J.-H."/>
            <person name="Kurtz D.M. Jr."/>
        </authorList>
    </citation>
    <scope>PROTEIN SEQUENCE OF 1-24</scope>
</reference>
<protein>
    <recommendedName>
        <fullName>Hemerythrin subunit beta</fullName>
    </recommendedName>
</protein>
<name>HEMTB_LINRE</name>
<proteinExistence type="evidence at protein level"/>
<keyword id="KW-0903">Direct protein sequencing</keyword>
<keyword id="KW-0408">Iron</keyword>
<keyword id="KW-0479">Metal-binding</keyword>
<keyword id="KW-0561">Oxygen transport</keyword>
<keyword id="KW-0813">Transport</keyword>
<dbReference type="PIR" id="S50178">
    <property type="entry name" value="S50178"/>
</dbReference>
<dbReference type="SMR" id="P23544"/>
<dbReference type="GO" id="GO:0005506">
    <property type="term" value="F:iron ion binding"/>
    <property type="evidence" value="ECO:0007669"/>
    <property type="project" value="InterPro"/>
</dbReference>
<dbReference type="GO" id="GO:0005344">
    <property type="term" value="F:oxygen carrier activity"/>
    <property type="evidence" value="ECO:0007669"/>
    <property type="project" value="UniProtKB-KW"/>
</dbReference>
<dbReference type="Gene3D" id="1.20.120.50">
    <property type="entry name" value="Hemerythrin-like"/>
    <property type="match status" value="1"/>
</dbReference>
<dbReference type="InterPro" id="IPR002063">
    <property type="entry name" value="Haemerythrin"/>
</dbReference>
<dbReference type="InterPro" id="IPR016131">
    <property type="entry name" value="Haemerythrin_Fe_BS"/>
</dbReference>
<dbReference type="InterPro" id="IPR050669">
    <property type="entry name" value="Hemerythrin"/>
</dbReference>
<dbReference type="InterPro" id="IPR012312">
    <property type="entry name" value="Hemerythrin-like"/>
</dbReference>
<dbReference type="InterPro" id="IPR035938">
    <property type="entry name" value="Hemerythrin-like_sf"/>
</dbReference>
<dbReference type="InterPro" id="IPR012827">
    <property type="entry name" value="Hemerythrin_metal-bd"/>
</dbReference>
<dbReference type="NCBIfam" id="TIGR02481">
    <property type="entry name" value="hemeryth_dom"/>
    <property type="match status" value="1"/>
</dbReference>
<dbReference type="NCBIfam" id="TIGR00058">
    <property type="entry name" value="Hemerythrin"/>
    <property type="match status" value="1"/>
</dbReference>
<dbReference type="PANTHER" id="PTHR37164">
    <property type="entry name" value="BACTERIOHEMERYTHRIN"/>
    <property type="match status" value="1"/>
</dbReference>
<dbReference type="PANTHER" id="PTHR37164:SF1">
    <property type="entry name" value="BACTERIOHEMERYTHRIN"/>
    <property type="match status" value="1"/>
</dbReference>
<dbReference type="Pfam" id="PF01814">
    <property type="entry name" value="Hemerythrin"/>
    <property type="match status" value="1"/>
</dbReference>
<dbReference type="PIRSF" id="PIRSF002033">
    <property type="entry name" value="Hemerythrin"/>
    <property type="match status" value="1"/>
</dbReference>
<dbReference type="PRINTS" id="PR00186">
    <property type="entry name" value="HEMERYTHRIN"/>
</dbReference>
<dbReference type="SUPFAM" id="SSF47188">
    <property type="entry name" value="Hemerythrin-like"/>
    <property type="match status" value="1"/>
</dbReference>
<dbReference type="PROSITE" id="PS00550">
    <property type="entry name" value="HEMERYTHRINS"/>
    <property type="match status" value="1"/>
</dbReference>
<comment type="function">
    <text>Hemerythrin is a respiratory protein in blood cells of certain marine worms. The oxygen-binding site in each chain contains two iron atoms.</text>
</comment>
<comment type="subunit">
    <text>Octamer composed of two types of chains: alpha and beta.</text>
</comment>
<comment type="similarity">
    <text evidence="2">Belongs to the hemerythrin family.</text>
</comment>
<sequence>MKVPAPYAWNSDFATTYENIDSEHRTLFNGLFALAEFNTLTQLNAAIEVFTLHFHDEQGQMIRSNYVNTKEHTDIHNGFMDVMRGWRSPVPQQDLLAGMAWLANHIPTEDFKYKGKL</sequence>
<organism>
    <name type="scientific">Lingula reevii</name>
    <name type="common">Inarticulated brachiopod</name>
    <dbReference type="NCBI Taxonomy" id="2792136"/>
    <lineage>
        <taxon>Eukaryota</taxon>
        <taxon>Metazoa</taxon>
        <taxon>Spiralia</taxon>
        <taxon>Lophotrochozoa</taxon>
        <taxon>Brachiopoda</taxon>
        <taxon>Linguliformea</taxon>
        <taxon>Lingulata</taxon>
        <taxon>Lingulida</taxon>
        <taxon>Linguloidea</taxon>
        <taxon>Lingulidae</taxon>
        <taxon>Lingula</taxon>
    </lineage>
</organism>